<dbReference type="EMBL" id="D31631">
    <property type="protein sequence ID" value="BAA06500.1"/>
    <property type="molecule type" value="Genomic_DNA"/>
</dbReference>
<dbReference type="PIR" id="JC2302">
    <property type="entry name" value="JC2302"/>
</dbReference>
<dbReference type="SMR" id="Q45292"/>
<dbReference type="CDD" id="cd21132">
    <property type="entry name" value="EVE-like"/>
    <property type="match status" value="1"/>
</dbReference>
<dbReference type="Gene3D" id="3.10.590.10">
    <property type="entry name" value="ph1033 like domains"/>
    <property type="match status" value="1"/>
</dbReference>
<dbReference type="HAMAP" id="MF_00771">
    <property type="entry name" value="UPF0310"/>
    <property type="match status" value="1"/>
</dbReference>
<dbReference type="InterPro" id="IPR002740">
    <property type="entry name" value="EVE_domain"/>
</dbReference>
<dbReference type="InterPro" id="IPR015947">
    <property type="entry name" value="PUA-like_sf"/>
</dbReference>
<dbReference type="InterPro" id="IPR022996">
    <property type="entry name" value="UPF0310"/>
</dbReference>
<dbReference type="NCBIfam" id="NF002616">
    <property type="entry name" value="PRK02268.1-2"/>
    <property type="match status" value="1"/>
</dbReference>
<dbReference type="Pfam" id="PF01878">
    <property type="entry name" value="EVE"/>
    <property type="match status" value="1"/>
</dbReference>
<dbReference type="SUPFAM" id="SSF88697">
    <property type="entry name" value="PUA domain-like"/>
    <property type="match status" value="1"/>
</dbReference>
<proteinExistence type="inferred from homology"/>
<evidence type="ECO:0000305" key="1"/>
<feature type="chain" id="PRO_0000059628" description="UPF0310 protein in gntR 5'region">
    <location>
        <begin position="1"/>
        <end position="147"/>
    </location>
</feature>
<name>YOUG_BACLI</name>
<accession>Q45292</accession>
<sequence>MLADAEWNEKKVLDRRTSRDHVLKGVSGGFAQLCHGKEAPLKRMNPDDWIIYYSPKQNLKDDAPYQKFTAVGEVSDNRVYKVHAGEGFSPYRRKINFLKCRETPIHPFIPNLSFIKNKRHWGYSFRFGHIEISEHDFKLIVKQMVKI</sequence>
<organism>
    <name type="scientific">Bacillus licheniformis</name>
    <dbReference type="NCBI Taxonomy" id="1402"/>
    <lineage>
        <taxon>Bacteria</taxon>
        <taxon>Bacillati</taxon>
        <taxon>Bacillota</taxon>
        <taxon>Bacilli</taxon>
        <taxon>Bacillales</taxon>
        <taxon>Bacillaceae</taxon>
        <taxon>Bacillus</taxon>
    </lineage>
</organism>
<reference key="1">
    <citation type="journal article" date="1994" name="DNA Res.">
        <title>Nucleotide sequence and features of the Bacillus licheniformis gnt operon.</title>
        <authorList>
            <person name="Yoshida K."/>
            <person name="Seki S."/>
            <person name="Fujita Y."/>
        </authorList>
    </citation>
    <scope>NUCLEOTIDE SEQUENCE [GENOMIC DNA]</scope>
    <source>
        <strain>BGSC5A2</strain>
    </source>
</reference>
<gene>
    <name type="primary">oug</name>
</gene>
<protein>
    <recommendedName>
        <fullName>UPF0310 protein in gntR 5'region</fullName>
    </recommendedName>
</protein>
<comment type="similarity">
    <text evidence="1">Belongs to the UPF0310 family.</text>
</comment>